<sequence>MRLRWTQGGNMWLGVLLTLQLCSSLEGQENSFTINSIHMEMLPGQEVHNGENLTLQCIVDVSTTSSVKPQHQVLFYKDDVLFHNVSSTKNTESYFISEARVYNSGRYKCTVILNNKEKTTAEYKVVVEGVSNPRVTLDKKEVIEGGVVKVTCSVPEEKPPVHFIIEKFELNVRDVKQRREKTANNQNSVTLEFTVEEQDRVILFSCQANVIFGTRVEISDSVRSDLVTVRESFSNPKFHISPKGVIIEGDQLLIKCTIQVTHQAQSFPEIIIQKDKEIVAHSRNGSEAVYSVMATVEHNSNYTCKVEASRISKVSSIMVNITELFSRPKLKSSATRLDQGESLRLWCSIPGAPPEANFTIQKGGMMMLQDQNLTKVASERDSGTYTCVAGIGKVVKRSNEVQIAVCEMLSKPSIFHDSGSEVIKGQTIEVSCQSINGTSPISYQLLKGSDLLASQNVSSNEPAVFKDNPTKDVEYQCIADNCHSHAGMPSKVLRVKVIAPVEEVKLSILLSEEVESGQAIVLQCSVKEGSGPITYKFYKEKENKPFHQVTLNDTQAIWHKPKASKDQEGQYYCLASNRATPSKNFLQSNILAVRVYLAPWKKGLIAVVVIAVIIAVLLLGARFYFLKKSKAKQMPVEMCRPAAPLLNSNNEKTLSDPNTEANRHYGYNEDVGNHAMKPLNENKEPLTLDVEYTEVEVTSPEPHRGLGTKGTETVYSEIRKADPDLVENRYSRTEGSLDGT</sequence>
<keyword id="KW-0130">Cell adhesion</keyword>
<keyword id="KW-0965">Cell junction</keyword>
<keyword id="KW-1003">Cell membrane</keyword>
<keyword id="KW-1015">Disulfide bond</keyword>
<keyword id="KW-0325">Glycoprotein</keyword>
<keyword id="KW-0393">Immunoglobulin domain</keyword>
<keyword id="KW-0472">Membrane</keyword>
<keyword id="KW-0597">Phosphoprotein</keyword>
<keyword id="KW-1185">Reference proteome</keyword>
<keyword id="KW-0677">Repeat</keyword>
<keyword id="KW-0732">Signal</keyword>
<keyword id="KW-0812">Transmembrane</keyword>
<keyword id="KW-1133">Transmembrane helix</keyword>
<accession>Q95242</accession>
<protein>
    <recommendedName>
        <fullName>Platelet endothelial cell adhesion molecule</fullName>
        <shortName>PECAM-1</shortName>
    </recommendedName>
    <cdAntigenName>CD31</cdAntigenName>
</protein>
<feature type="signal peptide" evidence="1">
    <location>
        <begin position="1"/>
        <end position="27"/>
    </location>
</feature>
<feature type="chain" id="PRO_0000014897" description="Platelet endothelial cell adhesion molecule">
    <location>
        <begin position="28"/>
        <end position="740"/>
    </location>
</feature>
<feature type="topological domain" description="Extracellular" evidence="5">
    <location>
        <begin position="28"/>
        <end position="602"/>
    </location>
</feature>
<feature type="transmembrane region" description="Helical" evidence="5">
    <location>
        <begin position="603"/>
        <end position="621"/>
    </location>
</feature>
<feature type="topological domain" description="Cytoplasmic" evidence="5">
    <location>
        <begin position="622"/>
        <end position="740"/>
    </location>
</feature>
<feature type="domain" description="Ig-like C2-type 1">
    <location>
        <begin position="35"/>
        <end position="126"/>
    </location>
</feature>
<feature type="domain" description="Ig-like C2-type 2">
    <location>
        <begin position="145"/>
        <end position="223"/>
    </location>
</feature>
<feature type="domain" description="Ig-like C2-type 3">
    <location>
        <begin position="236"/>
        <end position="315"/>
    </location>
</feature>
<feature type="domain" description="Ig-like C2-type 4">
    <location>
        <begin position="328"/>
        <end position="404"/>
    </location>
</feature>
<feature type="domain" description="Ig-like C2-type 5">
    <location>
        <begin position="425"/>
        <end position="494"/>
    </location>
</feature>
<feature type="domain" description="Ig-like C2-type 6">
    <location>
        <begin position="500"/>
        <end position="592"/>
    </location>
</feature>
<feature type="region of interest" description="Disordered" evidence="7">
    <location>
        <begin position="697"/>
        <end position="740"/>
    </location>
</feature>
<feature type="region of interest" description="Membrane-bound segment which detaches upon phosphorylation" evidence="2">
    <location>
        <begin position="711"/>
        <end position="731"/>
    </location>
</feature>
<feature type="region of interest" description="May play a role in cytoprotective signaling" evidence="1">
    <location>
        <begin position="723"/>
        <end position="740"/>
    </location>
</feature>
<feature type="short sequence motif" description="ITIM motif 1" evidence="2">
    <location>
        <begin position="690"/>
        <end position="695"/>
    </location>
</feature>
<feature type="short sequence motif" description="ITIM motif 2" evidence="2">
    <location>
        <begin position="713"/>
        <end position="718"/>
    </location>
</feature>
<feature type="compositionally biased region" description="Basic and acidic residues" evidence="7">
    <location>
        <begin position="717"/>
        <end position="732"/>
    </location>
</feature>
<feature type="modified residue" description="Phosphotyrosine; by FER" evidence="3">
    <location>
        <position position="692"/>
    </location>
</feature>
<feature type="modified residue" description="Phosphotyrosine; by FER" evidence="3">
    <location>
        <position position="715"/>
    </location>
</feature>
<feature type="modified residue" description="Phosphoserine" evidence="2">
    <location>
        <position position="731"/>
    </location>
</feature>
<feature type="modified residue" description="Phosphoserine" evidence="2">
    <location>
        <position position="736"/>
    </location>
</feature>
<feature type="glycosylation site" description="N-linked (GlcNAc...) asparagine" evidence="5">
    <location>
        <position position="52"/>
    </location>
</feature>
<feature type="glycosylation site" description="N-linked (GlcNAc...) asparagine" evidence="5">
    <location>
        <position position="84"/>
    </location>
</feature>
<feature type="glycosylation site" description="N-linked (GlcNAc...) asparagine" evidence="5">
    <location>
        <position position="284"/>
    </location>
</feature>
<feature type="glycosylation site" description="N-linked (GlcNAc...) asparagine" evidence="5">
    <location>
        <position position="301"/>
    </location>
</feature>
<feature type="glycosylation site" description="N-linked (GlcNAc...) asparagine" evidence="5">
    <location>
        <position position="320"/>
    </location>
</feature>
<feature type="glycosylation site" description="N-linked (GlcNAc...) asparagine" evidence="5">
    <location>
        <position position="357"/>
    </location>
</feature>
<feature type="glycosylation site" description="N-linked (GlcNAc...) asparagine" evidence="5">
    <location>
        <position position="372"/>
    </location>
</feature>
<feature type="glycosylation site" description="N-linked (GlcNAc...) asparagine" evidence="5">
    <location>
        <position position="436"/>
    </location>
</feature>
<feature type="glycosylation site" description="N-linked (GlcNAc...) asparagine" evidence="5">
    <location>
        <position position="456"/>
    </location>
</feature>
<feature type="glycosylation site" description="N-linked (GlcNAc...) asparagine" evidence="5">
    <location>
        <position position="552"/>
    </location>
</feature>
<feature type="disulfide bond" evidence="6">
    <location>
        <begin position="57"/>
        <end position="109"/>
    </location>
</feature>
<feature type="disulfide bond" evidence="6">
    <location>
        <begin position="152"/>
        <end position="206"/>
    </location>
</feature>
<feature type="disulfide bond" evidence="6">
    <location>
        <begin position="256"/>
        <end position="304"/>
    </location>
</feature>
<feature type="disulfide bond" evidence="6">
    <location>
        <begin position="347"/>
        <end position="387"/>
    </location>
</feature>
<feature type="disulfide bond" evidence="6">
    <location>
        <begin position="432"/>
        <end position="477"/>
    </location>
</feature>
<feature type="disulfide bond" evidence="6">
    <location>
        <begin position="524"/>
        <end position="573"/>
    </location>
</feature>
<dbReference type="EMBL" id="X98505">
    <property type="protein sequence ID" value="CAA67129.1"/>
    <property type="molecule type" value="mRNA"/>
</dbReference>
<dbReference type="RefSeq" id="NP_999072.1">
    <property type="nucleotide sequence ID" value="NM_213907.1"/>
</dbReference>
<dbReference type="SMR" id="Q95242"/>
<dbReference type="FunCoup" id="Q95242">
    <property type="interactions" value="107"/>
</dbReference>
<dbReference type="STRING" id="9823.ENSSSCP00000044878"/>
<dbReference type="GlyCosmos" id="Q95242">
    <property type="glycosylation" value="10 sites, No reported glycans"/>
</dbReference>
<dbReference type="GlyGen" id="Q95242">
    <property type="glycosylation" value="11 sites"/>
</dbReference>
<dbReference type="PaxDb" id="9823-ENSSSCP00000018307"/>
<dbReference type="PeptideAtlas" id="Q95242"/>
<dbReference type="Ensembl" id="ENSSSCT00025058845.1">
    <property type="protein sequence ID" value="ENSSSCP00025024947.1"/>
    <property type="gene ID" value="ENSSSCG00025043405.1"/>
</dbReference>
<dbReference type="Ensembl" id="ENSSSCT00025059067.1">
    <property type="protein sequence ID" value="ENSSSCP00025025044.1"/>
    <property type="gene ID" value="ENSSSCG00025043405.1"/>
</dbReference>
<dbReference type="Ensembl" id="ENSSSCT00025059675.1">
    <property type="protein sequence ID" value="ENSSSCP00025025313.1"/>
    <property type="gene ID" value="ENSSSCG00025043405.1"/>
</dbReference>
<dbReference type="Ensembl" id="ENSSSCT00040097607.1">
    <property type="protein sequence ID" value="ENSSSCP00040043531.1"/>
    <property type="gene ID" value="ENSSSCG00040070811.1"/>
</dbReference>
<dbReference type="Ensembl" id="ENSSSCT00060086795.1">
    <property type="protein sequence ID" value="ENSSSCP00060037546.1"/>
    <property type="gene ID" value="ENSSSCG00060063481.1"/>
</dbReference>
<dbReference type="Ensembl" id="ENSSSCT00065019120.1">
    <property type="protein sequence ID" value="ENSSSCP00065007819.1"/>
    <property type="gene ID" value="ENSSSCG00065014331.1"/>
</dbReference>
<dbReference type="Ensembl" id="ENSSSCT00070009557.1">
    <property type="protein sequence ID" value="ENSSSCP00070007841.1"/>
    <property type="gene ID" value="ENSSSCG00070005038.1"/>
</dbReference>
<dbReference type="GeneID" id="396941"/>
<dbReference type="KEGG" id="ssc:396941"/>
<dbReference type="CTD" id="5175"/>
<dbReference type="eggNOG" id="ENOG502QW63">
    <property type="taxonomic scope" value="Eukaryota"/>
</dbReference>
<dbReference type="HOGENOM" id="CLU_024558_0_0_1"/>
<dbReference type="InParanoid" id="Q95242"/>
<dbReference type="OrthoDB" id="9950534at2759"/>
<dbReference type="TreeFam" id="TF338229"/>
<dbReference type="Reactome" id="R-SSC-114608">
    <property type="pathway name" value="Platelet degranulation"/>
</dbReference>
<dbReference type="Reactome" id="R-SSC-202733">
    <property type="pathway name" value="Cell surface interactions at the vascular wall"/>
</dbReference>
<dbReference type="Reactome" id="R-SSC-210990">
    <property type="pathway name" value="PECAM1 interactions"/>
</dbReference>
<dbReference type="Reactome" id="R-SSC-216083">
    <property type="pathway name" value="Integrin cell surface interactions"/>
</dbReference>
<dbReference type="Reactome" id="R-SSC-432142">
    <property type="pathway name" value="Platelet sensitization by LDL"/>
</dbReference>
<dbReference type="Reactome" id="R-SSC-6798695">
    <property type="pathway name" value="Neutrophil degranulation"/>
</dbReference>
<dbReference type="Proteomes" id="UP000008227">
    <property type="component" value="Unplaced"/>
</dbReference>
<dbReference type="Proteomes" id="UP000314985">
    <property type="component" value="Chromosome 12"/>
</dbReference>
<dbReference type="Proteomes" id="UP000694570">
    <property type="component" value="Unplaced"/>
</dbReference>
<dbReference type="Proteomes" id="UP000694571">
    <property type="component" value="Unplaced"/>
</dbReference>
<dbReference type="Proteomes" id="UP000694720">
    <property type="component" value="Unplaced"/>
</dbReference>
<dbReference type="Proteomes" id="UP000694722">
    <property type="component" value="Unplaced"/>
</dbReference>
<dbReference type="Proteomes" id="UP000694723">
    <property type="component" value="Unplaced"/>
</dbReference>
<dbReference type="Proteomes" id="UP000694724">
    <property type="component" value="Unplaced"/>
</dbReference>
<dbReference type="Proteomes" id="UP000694725">
    <property type="component" value="Unplaced"/>
</dbReference>
<dbReference type="Proteomes" id="UP000694726">
    <property type="component" value="Unplaced"/>
</dbReference>
<dbReference type="Proteomes" id="UP000694727">
    <property type="component" value="Unplaced"/>
</dbReference>
<dbReference type="Proteomes" id="UP000694728">
    <property type="component" value="Unplaced"/>
</dbReference>
<dbReference type="GO" id="GO:0070161">
    <property type="term" value="C:anchoring junction"/>
    <property type="evidence" value="ECO:0007669"/>
    <property type="project" value="UniProtKB-SubCell"/>
</dbReference>
<dbReference type="GO" id="GO:0009897">
    <property type="term" value="C:external side of plasma membrane"/>
    <property type="evidence" value="ECO:0000318"/>
    <property type="project" value="GO_Central"/>
</dbReference>
<dbReference type="GO" id="GO:0045121">
    <property type="term" value="C:membrane raft"/>
    <property type="evidence" value="ECO:0007669"/>
    <property type="project" value="UniProtKB-SubCell"/>
</dbReference>
<dbReference type="GO" id="GO:0004888">
    <property type="term" value="F:transmembrane signaling receptor activity"/>
    <property type="evidence" value="ECO:0000318"/>
    <property type="project" value="GO_Central"/>
</dbReference>
<dbReference type="GO" id="GO:0007166">
    <property type="term" value="P:cell surface receptor signaling pathway"/>
    <property type="evidence" value="ECO:0000318"/>
    <property type="project" value="GO_Central"/>
</dbReference>
<dbReference type="GO" id="GO:0098742">
    <property type="term" value="P:cell-cell adhesion via plasma-membrane adhesion molecules"/>
    <property type="evidence" value="ECO:0000318"/>
    <property type="project" value="GO_Central"/>
</dbReference>
<dbReference type="GO" id="GO:0006955">
    <property type="term" value="P:immune response"/>
    <property type="evidence" value="ECO:0000318"/>
    <property type="project" value="GO_Central"/>
</dbReference>
<dbReference type="Gene3D" id="2.60.40.10">
    <property type="entry name" value="Immunoglobulins"/>
    <property type="match status" value="5"/>
</dbReference>
<dbReference type="InterPro" id="IPR007110">
    <property type="entry name" value="Ig-like_dom"/>
</dbReference>
<dbReference type="InterPro" id="IPR036179">
    <property type="entry name" value="Ig-like_dom_sf"/>
</dbReference>
<dbReference type="InterPro" id="IPR013783">
    <property type="entry name" value="Ig-like_fold"/>
</dbReference>
<dbReference type="InterPro" id="IPR050488">
    <property type="entry name" value="Ig_Fc_receptor"/>
</dbReference>
<dbReference type="InterPro" id="IPR003599">
    <property type="entry name" value="Ig_sub"/>
</dbReference>
<dbReference type="InterPro" id="IPR003598">
    <property type="entry name" value="Ig_sub2"/>
</dbReference>
<dbReference type="InterPro" id="IPR040878">
    <property type="entry name" value="IL-40-like_Ig"/>
</dbReference>
<dbReference type="PANTHER" id="PTHR11481">
    <property type="entry name" value="IMMUNOGLOBULIN FC RECEPTOR"/>
    <property type="match status" value="1"/>
</dbReference>
<dbReference type="PANTHER" id="PTHR11481:SF5">
    <property type="entry name" value="PLATELET ENDOTHELIAL CELL ADHESION MOLECULE"/>
    <property type="match status" value="1"/>
</dbReference>
<dbReference type="Pfam" id="PF13895">
    <property type="entry name" value="Ig_2"/>
    <property type="match status" value="3"/>
</dbReference>
<dbReference type="Pfam" id="PF13927">
    <property type="entry name" value="Ig_3"/>
    <property type="match status" value="1"/>
</dbReference>
<dbReference type="Pfam" id="PF17736">
    <property type="entry name" value="Ig_C17orf99"/>
    <property type="match status" value="1"/>
</dbReference>
<dbReference type="SMART" id="SM00409">
    <property type="entry name" value="IG"/>
    <property type="match status" value="5"/>
</dbReference>
<dbReference type="SMART" id="SM00408">
    <property type="entry name" value="IGc2"/>
    <property type="match status" value="2"/>
</dbReference>
<dbReference type="SUPFAM" id="SSF48726">
    <property type="entry name" value="Immunoglobulin"/>
    <property type="match status" value="5"/>
</dbReference>
<dbReference type="PROSITE" id="PS50835">
    <property type="entry name" value="IG_LIKE"/>
    <property type="match status" value="4"/>
</dbReference>
<gene>
    <name type="primary">PECAM1</name>
</gene>
<name>PECA1_PIG</name>
<comment type="function">
    <text evidence="2 4">Cell adhesion molecule which is required for leukocyte transendothelial migration (TEM) under most inflammatory conditions. Tyr-692 plays a critical role in TEM and is required for efficient trafficking of PECAM1 to and from the lateral border recycling compartment (LBRC) and is also essential for the LBRC membrane to be targeted around migrating leukocytes. Trans-homophilic interaction may play a role in endothelial cell-cell adhesion via cell junctions. Heterophilic interaction with CD177 plays a role in transendothelial migration of neutrophils. Homophilic ligation of PECAM1 prevents macrophage-mediated phagocytosis of neighboring viable leukocytes by transmitting a detachment signal. Promotes macrophage-mediated phagocytosis of apoptotic leukocytes by tethering them to the phagocytic cells; PECAM1-mediated detachment signal appears to be disabled in apoptotic leukocytes. Modulates bradykinin receptor BDKRB2 activation. Regulates bradykinin- and hyperosmotic shock-induced ERK1/2 activation in endothelial cells. Induces susceptibility to atherosclerosis.</text>
</comment>
<comment type="subunit">
    <text evidence="2 3">Trans-homodimer (via Ig-like C2-type 1 and Ig-like C2-type 2 domains); trans-homodimerization is required for cell-cell interaction. Forms a complex with BDKRB2 and GNAQ. Interacts with BDKRB2 and GNAQ. Interacts with PTPN11; Tyr-715 is critical for PTPN11 recruitment. Interacts with FER. Interacts with CD177; the interaction is Ca(2+)-dependent; the interaction is direct.</text>
</comment>
<comment type="subcellular location">
    <subcellularLocation>
        <location evidence="2">Cell membrane</location>
        <topology evidence="2">Single-pass type I membrane protein</topology>
    </subcellularLocation>
    <subcellularLocation>
        <location evidence="2">Membrane raft</location>
    </subcellularLocation>
    <subcellularLocation>
        <location evidence="2">Cell junction</location>
    </subcellularLocation>
    <text evidence="2">Localizes to the lateral border recycling compartment (LBRC) and recycles from the LBRC to the junction in resting endothelial cells. Cell surface expression on neutrophils is down-regulated upon fMLP or CXCL8/IL8-mediated stimulation.</text>
</comment>
<comment type="domain">
    <text evidence="1">The Ig-like C2-type domains 2 and 3 contribute to formation of the complex with BDKRB2 and in regulation of its activity.</text>
</comment>
<comment type="PTM">
    <text evidence="2 4">Phosphorylated on Ser and Tyr residues by src kinases after cellular activation. Upon activation, phosphorylated on Ser-731 which probably initiates the dissociation of the membrane-interaction segment (residues 711-731) from the cell membrane allowing the sequential phosphorylation of Tyr-715 and Tyr-692. Constitutively phosphorylated on Ser-736 in resting platelets. Phosphorylated on tyrosine residues by FER and FES in response to FCER1 activation. In endothelial cells Fyn mediates mechanical-force (stretch or pull) induced tyrosine phosphorylation.</text>
</comment>
<comment type="PTM">
    <text evidence="2">Palmitoylation by ZDHHC21 is necessary for cell surface expression in endothelial cells and enrichment in membrane rafts.</text>
</comment>
<evidence type="ECO:0000250" key="1"/>
<evidence type="ECO:0000250" key="2">
    <source>
        <dbReference type="UniProtKB" id="P16284"/>
    </source>
</evidence>
<evidence type="ECO:0000250" key="3">
    <source>
        <dbReference type="UniProtKB" id="P51866"/>
    </source>
</evidence>
<evidence type="ECO:0000250" key="4">
    <source>
        <dbReference type="UniProtKB" id="Q08481"/>
    </source>
</evidence>
<evidence type="ECO:0000255" key="5"/>
<evidence type="ECO:0000255" key="6">
    <source>
        <dbReference type="PROSITE-ProRule" id="PRU00114"/>
    </source>
</evidence>
<evidence type="ECO:0000256" key="7">
    <source>
        <dbReference type="SAM" id="MobiDB-lite"/>
    </source>
</evidence>
<organism>
    <name type="scientific">Sus scrofa</name>
    <name type="common">Pig</name>
    <dbReference type="NCBI Taxonomy" id="9823"/>
    <lineage>
        <taxon>Eukaryota</taxon>
        <taxon>Metazoa</taxon>
        <taxon>Chordata</taxon>
        <taxon>Craniata</taxon>
        <taxon>Vertebrata</taxon>
        <taxon>Euteleostomi</taxon>
        <taxon>Mammalia</taxon>
        <taxon>Eutheria</taxon>
        <taxon>Laurasiatheria</taxon>
        <taxon>Artiodactyla</taxon>
        <taxon>Suina</taxon>
        <taxon>Suidae</taxon>
        <taxon>Sus</taxon>
    </lineage>
</organism>
<reference key="1">
    <citation type="submission" date="1996-11" db="EMBL/GenBank/DDBJ databases">
        <authorList>
            <person name="Nasu K."/>
        </authorList>
    </citation>
    <scope>NUCLEOTIDE SEQUENCE [MRNA]</scope>
    <source>
        <tissue>Aortic endothelium</tissue>
    </source>
</reference>
<proteinExistence type="evidence at transcript level"/>